<sequence>MGKKQVALPRALPPMPSTSIDEIPHSRPKKKKTKSNNNTPDDVLQNAGFTTSENNDPLSPERRKRKKKRFSIDAETSLTQNNPSIPVVLNGKDTDNQTTEEGATRKPRRRTKKTRLAEEEFPNELGVEDEDIIPDGHTKIPTQNPAFLASSLTSQPVGKLFVEKNRRFQAADRSEIIKTTEQMDVFLDVKPTWSSMDVSLTAHHIFRMVGLFCCGFLAGYAVWNIVVIYVLAGSQLTNLPNLLQTYKILAYPSQCFLYFLLVLSTVTAFDRIDLERAADALRGLLKLDPAAVASFFYFVALFLVLSQQMTSDRMNFYTPPTQNGSLWQTDTEGQILQPWIVINLVVAILVGLAWLFLSCRPDIDHSEEAMFIPEEEDYPDMEKGMKIQG</sequence>
<protein>
    <recommendedName>
        <fullName>Transmembrane protein 237</fullName>
    </recommendedName>
</protein>
<gene>
    <name type="primary">tmem237</name>
</gene>
<reference key="1">
    <citation type="submission" date="2007-12" db="EMBL/GenBank/DDBJ databases">
        <authorList>
            <consortium name="NIH - Xenopus Gene Collection (XGC) project"/>
        </authorList>
    </citation>
    <scope>NUCLEOTIDE SEQUENCE [LARGE SCALE MRNA]</scope>
    <source>
        <tissue>Embryo</tissue>
    </source>
</reference>
<feature type="chain" id="PRO_0000415833" description="Transmembrane protein 237">
    <location>
        <begin position="1"/>
        <end position="389"/>
    </location>
</feature>
<feature type="transmembrane region" description="Helical" evidence="2">
    <location>
        <begin position="211"/>
        <end position="231"/>
    </location>
</feature>
<feature type="transmembrane region" description="Helical" evidence="2">
    <location>
        <begin position="248"/>
        <end position="268"/>
    </location>
</feature>
<feature type="transmembrane region" description="Helical" evidence="2">
    <location>
        <begin position="284"/>
        <end position="304"/>
    </location>
</feature>
<feature type="transmembrane region" description="Helical" evidence="2">
    <location>
        <begin position="339"/>
        <end position="359"/>
    </location>
</feature>
<feature type="region of interest" description="Disordered" evidence="3">
    <location>
        <begin position="1"/>
        <end position="116"/>
    </location>
</feature>
<feature type="compositionally biased region" description="Polar residues" evidence="3">
    <location>
        <begin position="47"/>
        <end position="57"/>
    </location>
</feature>
<feature type="compositionally biased region" description="Polar residues" evidence="3">
    <location>
        <begin position="74"/>
        <end position="84"/>
    </location>
</feature>
<feature type="compositionally biased region" description="Basic residues" evidence="3">
    <location>
        <begin position="105"/>
        <end position="114"/>
    </location>
</feature>
<name>TM237_XENLA</name>
<dbReference type="EMBL" id="BC157443">
    <property type="protein sequence ID" value="AAI57444.1"/>
    <property type="molecule type" value="mRNA"/>
</dbReference>
<dbReference type="RefSeq" id="NP_001108263.1">
    <property type="nucleotide sequence ID" value="NM_001114791.1"/>
</dbReference>
<dbReference type="GeneID" id="100137642"/>
<dbReference type="KEGG" id="xla:100137642"/>
<dbReference type="AGR" id="Xenbase:XB-GENE-1194182"/>
<dbReference type="CTD" id="100137642"/>
<dbReference type="Xenbase" id="XB-GENE-1194182">
    <property type="gene designation" value="tmem237.L"/>
</dbReference>
<dbReference type="OrthoDB" id="550113at2759"/>
<dbReference type="Proteomes" id="UP000186698">
    <property type="component" value="Chromosome 9_10L"/>
</dbReference>
<dbReference type="Bgee" id="100137642">
    <property type="expression patterns" value="Expressed in egg cell and 19 other cell types or tissues"/>
</dbReference>
<dbReference type="GO" id="GO:0035869">
    <property type="term" value="C:ciliary transition zone"/>
    <property type="evidence" value="ECO:0000250"/>
    <property type="project" value="UniProtKB"/>
</dbReference>
<dbReference type="GO" id="GO:0016020">
    <property type="term" value="C:membrane"/>
    <property type="evidence" value="ECO:0007669"/>
    <property type="project" value="UniProtKB-SubCell"/>
</dbReference>
<dbReference type="GO" id="GO:0060271">
    <property type="term" value="P:cilium assembly"/>
    <property type="evidence" value="ECO:0000250"/>
    <property type="project" value="UniProtKB"/>
</dbReference>
<dbReference type="GO" id="GO:0030111">
    <property type="term" value="P:regulation of Wnt signaling pathway"/>
    <property type="evidence" value="ECO:0000250"/>
    <property type="project" value="UniProtKB"/>
</dbReference>
<dbReference type="InterPro" id="IPR029409">
    <property type="entry name" value="TMEM237"/>
</dbReference>
<dbReference type="PANTHER" id="PTHR28388">
    <property type="entry name" value="TRANSMEMBRANE PROTEIN 237"/>
    <property type="match status" value="1"/>
</dbReference>
<dbReference type="PANTHER" id="PTHR28388:SF1">
    <property type="entry name" value="TRANSMEMBRANE PROTEIN 237"/>
    <property type="match status" value="1"/>
</dbReference>
<dbReference type="Pfam" id="PF15383">
    <property type="entry name" value="TMEM237"/>
    <property type="match status" value="1"/>
</dbReference>
<accession>A9ULX8</accession>
<comment type="function">
    <text evidence="1">Component of the transition zone in primary cilia. Required for ciliogenesis (By similarity).</text>
</comment>
<comment type="subcellular location">
    <subcellularLocation>
        <location evidence="4">Membrane</location>
        <topology evidence="4">Multi-pass membrane protein</topology>
    </subcellularLocation>
    <subcellularLocation>
        <location evidence="1">Cell projection</location>
        <location evidence="1">Cilium</location>
    </subcellularLocation>
    <text evidence="1">Localizes to the transition zone.</text>
</comment>
<comment type="similarity">
    <text evidence="4">Belongs to the TMEM237 family.</text>
</comment>
<proteinExistence type="evidence at transcript level"/>
<keyword id="KW-0966">Cell projection</keyword>
<keyword id="KW-0969">Cilium</keyword>
<keyword id="KW-0970">Cilium biogenesis/degradation</keyword>
<keyword id="KW-0472">Membrane</keyword>
<keyword id="KW-1185">Reference proteome</keyword>
<keyword id="KW-0812">Transmembrane</keyword>
<keyword id="KW-1133">Transmembrane helix</keyword>
<evidence type="ECO:0000250" key="1"/>
<evidence type="ECO:0000255" key="2"/>
<evidence type="ECO:0000256" key="3">
    <source>
        <dbReference type="SAM" id="MobiDB-lite"/>
    </source>
</evidence>
<evidence type="ECO:0000305" key="4"/>
<organism>
    <name type="scientific">Xenopus laevis</name>
    <name type="common">African clawed frog</name>
    <dbReference type="NCBI Taxonomy" id="8355"/>
    <lineage>
        <taxon>Eukaryota</taxon>
        <taxon>Metazoa</taxon>
        <taxon>Chordata</taxon>
        <taxon>Craniata</taxon>
        <taxon>Vertebrata</taxon>
        <taxon>Euteleostomi</taxon>
        <taxon>Amphibia</taxon>
        <taxon>Batrachia</taxon>
        <taxon>Anura</taxon>
        <taxon>Pipoidea</taxon>
        <taxon>Pipidae</taxon>
        <taxon>Xenopodinae</taxon>
        <taxon>Xenopus</taxon>
        <taxon>Xenopus</taxon>
    </lineage>
</organism>